<organism>
    <name type="scientific">Xylella fastidiosa (strain M12)</name>
    <dbReference type="NCBI Taxonomy" id="405440"/>
    <lineage>
        <taxon>Bacteria</taxon>
        <taxon>Pseudomonadati</taxon>
        <taxon>Pseudomonadota</taxon>
        <taxon>Gammaproteobacteria</taxon>
        <taxon>Lysobacterales</taxon>
        <taxon>Lysobacteraceae</taxon>
        <taxon>Xylella</taxon>
    </lineage>
</organism>
<comment type="function">
    <text evidence="1">Catalyzes the decarboxylative condensation of pimeloyl-[acyl-carrier protein] and L-alanine to produce 8-amino-7-oxononanoate (AON), [acyl-carrier protein], and carbon dioxide.</text>
</comment>
<comment type="catalytic activity">
    <reaction evidence="1">
        <text>6-carboxyhexanoyl-[ACP] + L-alanine + H(+) = (8S)-8-amino-7-oxononanoate + holo-[ACP] + CO2</text>
        <dbReference type="Rhea" id="RHEA:42288"/>
        <dbReference type="Rhea" id="RHEA-COMP:9685"/>
        <dbReference type="Rhea" id="RHEA-COMP:9955"/>
        <dbReference type="ChEBI" id="CHEBI:15378"/>
        <dbReference type="ChEBI" id="CHEBI:16526"/>
        <dbReference type="ChEBI" id="CHEBI:57972"/>
        <dbReference type="ChEBI" id="CHEBI:64479"/>
        <dbReference type="ChEBI" id="CHEBI:78846"/>
        <dbReference type="ChEBI" id="CHEBI:149468"/>
        <dbReference type="EC" id="2.3.1.47"/>
    </reaction>
</comment>
<comment type="cofactor">
    <cofactor evidence="1">
        <name>pyridoxal 5'-phosphate</name>
        <dbReference type="ChEBI" id="CHEBI:597326"/>
    </cofactor>
</comment>
<comment type="pathway">
    <text evidence="1">Cofactor biosynthesis; biotin biosynthesis.</text>
</comment>
<comment type="subunit">
    <text evidence="1">Homodimer.</text>
</comment>
<comment type="similarity">
    <text evidence="1">Belongs to the class-II pyridoxal-phosphate-dependent aminotransferase family. BioF subfamily.</text>
</comment>
<gene>
    <name evidence="1" type="primary">bioF</name>
    <name type="ordered locus">Xfasm12_0710</name>
</gene>
<proteinExistence type="inferred from homology"/>
<protein>
    <recommendedName>
        <fullName evidence="1">8-amino-7-oxononanoate synthase</fullName>
        <shortName evidence="1">AONS</shortName>
        <ecNumber evidence="1">2.3.1.47</ecNumber>
    </recommendedName>
    <alternativeName>
        <fullName evidence="1">7-keto-8-amino-pelargonic acid synthase</fullName>
        <shortName evidence="1">7-KAP synthase</shortName>
        <shortName evidence="1">KAPA synthase</shortName>
    </alternativeName>
    <alternativeName>
        <fullName evidence="1">8-amino-7-ketopelargonate synthase</fullName>
    </alternativeName>
</protein>
<dbReference type="EC" id="2.3.1.47" evidence="1"/>
<dbReference type="EMBL" id="CP000941">
    <property type="protein sequence ID" value="ACA11706.1"/>
    <property type="molecule type" value="Genomic_DNA"/>
</dbReference>
<dbReference type="RefSeq" id="WP_004083852.1">
    <property type="nucleotide sequence ID" value="NC_010513.1"/>
</dbReference>
<dbReference type="SMR" id="B0U6J0"/>
<dbReference type="KEGG" id="xfm:Xfasm12_0710"/>
<dbReference type="HOGENOM" id="CLU_015846_11_2_6"/>
<dbReference type="UniPathway" id="UPA00078"/>
<dbReference type="GO" id="GO:0008710">
    <property type="term" value="F:8-amino-7-oxononanoate synthase activity"/>
    <property type="evidence" value="ECO:0007669"/>
    <property type="project" value="UniProtKB-UniRule"/>
</dbReference>
<dbReference type="GO" id="GO:0030170">
    <property type="term" value="F:pyridoxal phosphate binding"/>
    <property type="evidence" value="ECO:0007669"/>
    <property type="project" value="UniProtKB-UniRule"/>
</dbReference>
<dbReference type="GO" id="GO:0009102">
    <property type="term" value="P:biotin biosynthetic process"/>
    <property type="evidence" value="ECO:0007669"/>
    <property type="project" value="UniProtKB-UniRule"/>
</dbReference>
<dbReference type="Gene3D" id="3.90.1150.10">
    <property type="entry name" value="Aspartate Aminotransferase, domain 1"/>
    <property type="match status" value="1"/>
</dbReference>
<dbReference type="Gene3D" id="3.40.640.10">
    <property type="entry name" value="Type I PLP-dependent aspartate aminotransferase-like (Major domain)"/>
    <property type="match status" value="1"/>
</dbReference>
<dbReference type="HAMAP" id="MF_01693">
    <property type="entry name" value="BioF_aminotrans_2"/>
    <property type="match status" value="1"/>
</dbReference>
<dbReference type="InterPro" id="IPR001917">
    <property type="entry name" value="Aminotrans_II_pyridoxalP_BS"/>
</dbReference>
<dbReference type="InterPro" id="IPR004839">
    <property type="entry name" value="Aminotransferase_I/II_large"/>
</dbReference>
<dbReference type="InterPro" id="IPR050087">
    <property type="entry name" value="AON_synthase_class-II"/>
</dbReference>
<dbReference type="InterPro" id="IPR004723">
    <property type="entry name" value="AONS_Archaea/Proteobacteria"/>
</dbReference>
<dbReference type="InterPro" id="IPR022834">
    <property type="entry name" value="AONS_Proteobacteria"/>
</dbReference>
<dbReference type="InterPro" id="IPR015424">
    <property type="entry name" value="PyrdxlP-dep_Trfase"/>
</dbReference>
<dbReference type="InterPro" id="IPR015421">
    <property type="entry name" value="PyrdxlP-dep_Trfase_major"/>
</dbReference>
<dbReference type="InterPro" id="IPR015422">
    <property type="entry name" value="PyrdxlP-dep_Trfase_small"/>
</dbReference>
<dbReference type="NCBIfam" id="TIGR00858">
    <property type="entry name" value="bioF"/>
    <property type="match status" value="1"/>
</dbReference>
<dbReference type="PANTHER" id="PTHR13693:SF100">
    <property type="entry name" value="8-AMINO-7-OXONONANOATE SYNTHASE"/>
    <property type="match status" value="1"/>
</dbReference>
<dbReference type="PANTHER" id="PTHR13693">
    <property type="entry name" value="CLASS II AMINOTRANSFERASE/8-AMINO-7-OXONONANOATE SYNTHASE"/>
    <property type="match status" value="1"/>
</dbReference>
<dbReference type="Pfam" id="PF00155">
    <property type="entry name" value="Aminotran_1_2"/>
    <property type="match status" value="1"/>
</dbReference>
<dbReference type="SUPFAM" id="SSF53383">
    <property type="entry name" value="PLP-dependent transferases"/>
    <property type="match status" value="1"/>
</dbReference>
<dbReference type="PROSITE" id="PS00599">
    <property type="entry name" value="AA_TRANSFER_CLASS_2"/>
    <property type="match status" value="1"/>
</dbReference>
<keyword id="KW-0093">Biotin biosynthesis</keyword>
<keyword id="KW-0663">Pyridoxal phosphate</keyword>
<keyword id="KW-0808">Transferase</keyword>
<evidence type="ECO:0000255" key="1">
    <source>
        <dbReference type="HAMAP-Rule" id="MF_01693"/>
    </source>
</evidence>
<reference key="1">
    <citation type="journal article" date="2010" name="J. Bacteriol.">
        <title>Whole genome sequences of two Xylella fastidiosa strains (M12 and M23) causing almond leaf scorch disease in California.</title>
        <authorList>
            <person name="Chen J."/>
            <person name="Xie G."/>
            <person name="Han S."/>
            <person name="Chertkov O."/>
            <person name="Sims D."/>
            <person name="Civerolo E.L."/>
        </authorList>
    </citation>
    <scope>NUCLEOTIDE SEQUENCE [LARGE SCALE GENOMIC DNA]</scope>
    <source>
        <strain>M12</strain>
    </source>
</reference>
<name>BIOF_XYLFM</name>
<accession>B0U6J0</accession>
<feature type="chain" id="PRO_0000381150" description="8-amino-7-oxononanoate synthase">
    <location>
        <begin position="1"/>
        <end position="401"/>
    </location>
</feature>
<feature type="binding site" evidence="1">
    <location>
        <position position="24"/>
    </location>
    <ligand>
        <name>substrate</name>
    </ligand>
</feature>
<feature type="binding site" evidence="1">
    <location>
        <begin position="111"/>
        <end position="112"/>
    </location>
    <ligand>
        <name>pyridoxal 5'-phosphate</name>
        <dbReference type="ChEBI" id="CHEBI:597326"/>
    </ligand>
</feature>
<feature type="binding site" evidence="1">
    <location>
        <position position="137"/>
    </location>
    <ligand>
        <name>substrate</name>
    </ligand>
</feature>
<feature type="binding site" evidence="1">
    <location>
        <position position="183"/>
    </location>
    <ligand>
        <name>pyridoxal 5'-phosphate</name>
        <dbReference type="ChEBI" id="CHEBI:597326"/>
    </ligand>
</feature>
<feature type="binding site" evidence="1">
    <location>
        <position position="211"/>
    </location>
    <ligand>
        <name>pyridoxal 5'-phosphate</name>
        <dbReference type="ChEBI" id="CHEBI:597326"/>
    </ligand>
</feature>
<feature type="binding site" evidence="1">
    <location>
        <position position="240"/>
    </location>
    <ligand>
        <name>pyridoxal 5'-phosphate</name>
        <dbReference type="ChEBI" id="CHEBI:597326"/>
    </ligand>
</feature>
<feature type="binding site" evidence="1">
    <location>
        <position position="357"/>
    </location>
    <ligand>
        <name>substrate</name>
    </ligand>
</feature>
<feature type="modified residue" description="N6-(pyridoxal phosphate)lysine" evidence="1">
    <location>
        <position position="243"/>
    </location>
</feature>
<sequence length="401" mass="43920">MTRPDLNERILSLRKLRLAQCRTRTRRTIERRNGVRLEINGSWLVEFCSNDYLGLAQHFEIIAALQDAAARNGIGATASHLICGHHAIHKALEYELAEWLGYPRALLFGSGFTANLAVQQALLTKENDICVQDRLNHASLIDATRLAGCRLRRYPHLDVDGAAHQLKNAPEGAAMLATDGIFSMDGDIAPLRALSLVARTQQALMYVDDAHGIGVTGPQGRGCIAAAWLSVEEVPLQLVTLSKALGGYGAAVLGSATLIQHLAETARPYIYTTALPPAQAAAALTAIRIARRDEWRRQRLQELVERFRENSRRHGLEIMDSETPIQPLQCGDETTTMAMSAALEREGFLVNAIRPPTVPEGKSRLRVTLSALHTTEQIDTLVQALARSRDTLATEAAPVQV</sequence>